<name>ACPS_BACCZ</name>
<sequence length="119" mass="13169">MIVGIGIDIIELNRIEKMLDGKLKFMERILTENERNVAKGLKGSRLTEFVAGRFAAKEAYSKAVGTGIGKEVSFLDIEVRNDDRGKPILITSTEHIVHLSISHSKEFAVAQVVLESSSR</sequence>
<gene>
    <name evidence="1" type="primary">acpS</name>
    <name type="ordered locus">BCE33L0224</name>
</gene>
<evidence type="ECO:0000255" key="1">
    <source>
        <dbReference type="HAMAP-Rule" id="MF_00101"/>
    </source>
</evidence>
<organism>
    <name type="scientific">Bacillus cereus (strain ZK / E33L)</name>
    <dbReference type="NCBI Taxonomy" id="288681"/>
    <lineage>
        <taxon>Bacteria</taxon>
        <taxon>Bacillati</taxon>
        <taxon>Bacillota</taxon>
        <taxon>Bacilli</taxon>
        <taxon>Bacillales</taxon>
        <taxon>Bacillaceae</taxon>
        <taxon>Bacillus</taxon>
        <taxon>Bacillus cereus group</taxon>
    </lineage>
</organism>
<dbReference type="EC" id="2.7.8.7" evidence="1"/>
<dbReference type="EMBL" id="CP000001">
    <property type="protein sequence ID" value="AAU20010.1"/>
    <property type="molecule type" value="Genomic_DNA"/>
</dbReference>
<dbReference type="RefSeq" id="WP_000635039.1">
    <property type="nucleotide sequence ID" value="NC_006274.1"/>
</dbReference>
<dbReference type="SMR" id="Q63GX2"/>
<dbReference type="KEGG" id="bcz:BCE33L0224"/>
<dbReference type="PATRIC" id="fig|288681.22.peg.5387"/>
<dbReference type="Proteomes" id="UP000002612">
    <property type="component" value="Chromosome"/>
</dbReference>
<dbReference type="GO" id="GO:0005829">
    <property type="term" value="C:cytosol"/>
    <property type="evidence" value="ECO:0007669"/>
    <property type="project" value="TreeGrafter"/>
</dbReference>
<dbReference type="GO" id="GO:0008897">
    <property type="term" value="F:holo-[acyl-carrier-protein] synthase activity"/>
    <property type="evidence" value="ECO:0007669"/>
    <property type="project" value="UniProtKB-UniRule"/>
</dbReference>
<dbReference type="GO" id="GO:0000287">
    <property type="term" value="F:magnesium ion binding"/>
    <property type="evidence" value="ECO:0007669"/>
    <property type="project" value="UniProtKB-UniRule"/>
</dbReference>
<dbReference type="GO" id="GO:0006633">
    <property type="term" value="P:fatty acid biosynthetic process"/>
    <property type="evidence" value="ECO:0007669"/>
    <property type="project" value="UniProtKB-UniRule"/>
</dbReference>
<dbReference type="GO" id="GO:0019878">
    <property type="term" value="P:lysine biosynthetic process via aminoadipic acid"/>
    <property type="evidence" value="ECO:0007669"/>
    <property type="project" value="TreeGrafter"/>
</dbReference>
<dbReference type="Gene3D" id="3.90.470.20">
    <property type="entry name" value="4'-phosphopantetheinyl transferase domain"/>
    <property type="match status" value="1"/>
</dbReference>
<dbReference type="HAMAP" id="MF_00101">
    <property type="entry name" value="AcpS"/>
    <property type="match status" value="1"/>
</dbReference>
<dbReference type="InterPro" id="IPR008278">
    <property type="entry name" value="4-PPantetheinyl_Trfase_dom"/>
</dbReference>
<dbReference type="InterPro" id="IPR037143">
    <property type="entry name" value="4-PPantetheinyl_Trfase_dom_sf"/>
</dbReference>
<dbReference type="InterPro" id="IPR002582">
    <property type="entry name" value="ACPS"/>
</dbReference>
<dbReference type="InterPro" id="IPR050559">
    <property type="entry name" value="P-Pant_transferase_sf"/>
</dbReference>
<dbReference type="InterPro" id="IPR004568">
    <property type="entry name" value="Ppantetheine-prot_Trfase_dom"/>
</dbReference>
<dbReference type="NCBIfam" id="TIGR00516">
    <property type="entry name" value="acpS"/>
    <property type="match status" value="1"/>
</dbReference>
<dbReference type="NCBIfam" id="TIGR00556">
    <property type="entry name" value="pantethn_trn"/>
    <property type="match status" value="1"/>
</dbReference>
<dbReference type="PANTHER" id="PTHR12215:SF10">
    <property type="entry name" value="L-AMINOADIPATE-SEMIALDEHYDE DEHYDROGENASE-PHOSPHOPANTETHEINYL TRANSFERASE"/>
    <property type="match status" value="1"/>
</dbReference>
<dbReference type="PANTHER" id="PTHR12215">
    <property type="entry name" value="PHOSPHOPANTETHEINE TRANSFERASE"/>
    <property type="match status" value="1"/>
</dbReference>
<dbReference type="Pfam" id="PF01648">
    <property type="entry name" value="ACPS"/>
    <property type="match status" value="1"/>
</dbReference>
<dbReference type="SUPFAM" id="SSF56214">
    <property type="entry name" value="4'-phosphopantetheinyl transferase"/>
    <property type="match status" value="1"/>
</dbReference>
<feature type="chain" id="PRO_0000175609" description="Holo-[acyl-carrier-protein] synthase">
    <location>
        <begin position="1"/>
        <end position="119"/>
    </location>
</feature>
<feature type="binding site" evidence="1">
    <location>
        <position position="8"/>
    </location>
    <ligand>
        <name>Mg(2+)</name>
        <dbReference type="ChEBI" id="CHEBI:18420"/>
    </ligand>
</feature>
<feature type="binding site" evidence="1">
    <location>
        <position position="58"/>
    </location>
    <ligand>
        <name>Mg(2+)</name>
        <dbReference type="ChEBI" id="CHEBI:18420"/>
    </ligand>
</feature>
<reference key="1">
    <citation type="journal article" date="2006" name="J. Bacteriol.">
        <title>Pathogenomic sequence analysis of Bacillus cereus and Bacillus thuringiensis isolates closely related to Bacillus anthracis.</title>
        <authorList>
            <person name="Han C.S."/>
            <person name="Xie G."/>
            <person name="Challacombe J.F."/>
            <person name="Altherr M.R."/>
            <person name="Bhotika S.S."/>
            <person name="Bruce D."/>
            <person name="Campbell C.S."/>
            <person name="Campbell M.L."/>
            <person name="Chen J."/>
            <person name="Chertkov O."/>
            <person name="Cleland C."/>
            <person name="Dimitrijevic M."/>
            <person name="Doggett N.A."/>
            <person name="Fawcett J.J."/>
            <person name="Glavina T."/>
            <person name="Goodwin L.A."/>
            <person name="Hill K.K."/>
            <person name="Hitchcock P."/>
            <person name="Jackson P.J."/>
            <person name="Keim P."/>
            <person name="Kewalramani A.R."/>
            <person name="Longmire J."/>
            <person name="Lucas S."/>
            <person name="Malfatti S."/>
            <person name="McMurry K."/>
            <person name="Meincke L.J."/>
            <person name="Misra M."/>
            <person name="Moseman B.L."/>
            <person name="Mundt M."/>
            <person name="Munk A.C."/>
            <person name="Okinaka R.T."/>
            <person name="Parson-Quintana B."/>
            <person name="Reilly L.P."/>
            <person name="Richardson P."/>
            <person name="Robinson D.L."/>
            <person name="Rubin E."/>
            <person name="Saunders E."/>
            <person name="Tapia R."/>
            <person name="Tesmer J.G."/>
            <person name="Thayer N."/>
            <person name="Thompson L.S."/>
            <person name="Tice H."/>
            <person name="Ticknor L.O."/>
            <person name="Wills P.L."/>
            <person name="Brettin T.S."/>
            <person name="Gilna P."/>
        </authorList>
    </citation>
    <scope>NUCLEOTIDE SEQUENCE [LARGE SCALE GENOMIC DNA]</scope>
    <source>
        <strain>ZK / E33L</strain>
    </source>
</reference>
<keyword id="KW-0963">Cytoplasm</keyword>
<keyword id="KW-0275">Fatty acid biosynthesis</keyword>
<keyword id="KW-0276">Fatty acid metabolism</keyword>
<keyword id="KW-0444">Lipid biosynthesis</keyword>
<keyword id="KW-0443">Lipid metabolism</keyword>
<keyword id="KW-0460">Magnesium</keyword>
<keyword id="KW-0479">Metal-binding</keyword>
<keyword id="KW-0808">Transferase</keyword>
<comment type="function">
    <text evidence="1">Transfers the 4'-phosphopantetheine moiety from coenzyme A to a Ser of acyl-carrier-protein.</text>
</comment>
<comment type="catalytic activity">
    <reaction evidence="1">
        <text>apo-[ACP] + CoA = holo-[ACP] + adenosine 3',5'-bisphosphate + H(+)</text>
        <dbReference type="Rhea" id="RHEA:12068"/>
        <dbReference type="Rhea" id="RHEA-COMP:9685"/>
        <dbReference type="Rhea" id="RHEA-COMP:9690"/>
        <dbReference type="ChEBI" id="CHEBI:15378"/>
        <dbReference type="ChEBI" id="CHEBI:29999"/>
        <dbReference type="ChEBI" id="CHEBI:57287"/>
        <dbReference type="ChEBI" id="CHEBI:58343"/>
        <dbReference type="ChEBI" id="CHEBI:64479"/>
        <dbReference type="EC" id="2.7.8.7"/>
    </reaction>
</comment>
<comment type="cofactor">
    <cofactor evidence="1">
        <name>Mg(2+)</name>
        <dbReference type="ChEBI" id="CHEBI:18420"/>
    </cofactor>
</comment>
<comment type="subcellular location">
    <subcellularLocation>
        <location evidence="1">Cytoplasm</location>
    </subcellularLocation>
</comment>
<comment type="similarity">
    <text evidence="1">Belongs to the P-Pant transferase superfamily. AcpS family.</text>
</comment>
<accession>Q63GX2</accession>
<protein>
    <recommendedName>
        <fullName evidence="1">Holo-[acyl-carrier-protein] synthase</fullName>
        <shortName evidence="1">Holo-ACP synthase</shortName>
        <ecNumber evidence="1">2.7.8.7</ecNumber>
    </recommendedName>
    <alternativeName>
        <fullName evidence="1">4'-phosphopantetheinyl transferase AcpS</fullName>
    </alternativeName>
</protein>
<proteinExistence type="inferred from homology"/>